<proteinExistence type="inferred from homology"/>
<evidence type="ECO:0000250" key="1">
    <source>
        <dbReference type="UniProtKB" id="P68137"/>
    </source>
</evidence>
<evidence type="ECO:0000305" key="2"/>
<organism>
    <name type="scientific">Glycine max</name>
    <name type="common">Soybean</name>
    <name type="synonym">Glycine hispida</name>
    <dbReference type="NCBI Taxonomy" id="3847"/>
    <lineage>
        <taxon>Eukaryota</taxon>
        <taxon>Viridiplantae</taxon>
        <taxon>Streptophyta</taxon>
        <taxon>Embryophyta</taxon>
        <taxon>Tracheophyta</taxon>
        <taxon>Spermatophyta</taxon>
        <taxon>Magnoliopsida</taxon>
        <taxon>eudicotyledons</taxon>
        <taxon>Gunneridae</taxon>
        <taxon>Pentapetalae</taxon>
        <taxon>rosids</taxon>
        <taxon>fabids</taxon>
        <taxon>Fabales</taxon>
        <taxon>Fabaceae</taxon>
        <taxon>Papilionoideae</taxon>
        <taxon>50 kb inversion clade</taxon>
        <taxon>NPAAA clade</taxon>
        <taxon>indigoferoid/millettioid clade</taxon>
        <taxon>Phaseoleae</taxon>
        <taxon>Glycine</taxon>
        <taxon>Glycine subgen. Soja</taxon>
    </lineage>
</organism>
<accession>P02580</accession>
<accession>Q96427</accession>
<comment type="function">
    <text>Actins are highly conserved proteins that are involved in various types of cell motility and are ubiquitously expressed in all eukaryotic cells. Essential component of cell cytoskeleton; plays an important role in cytoplasmic streaming, cell shape determination, cell division, organelle movement and extension growth.</text>
</comment>
<comment type="catalytic activity">
    <reaction evidence="1">
        <text>ATP + H2O = ADP + phosphate + H(+)</text>
        <dbReference type="Rhea" id="RHEA:13065"/>
        <dbReference type="ChEBI" id="CHEBI:15377"/>
        <dbReference type="ChEBI" id="CHEBI:15378"/>
        <dbReference type="ChEBI" id="CHEBI:30616"/>
        <dbReference type="ChEBI" id="CHEBI:43474"/>
        <dbReference type="ChEBI" id="CHEBI:456216"/>
    </reaction>
</comment>
<comment type="subcellular location">
    <subcellularLocation>
        <location>Cytoplasm</location>
        <location>Cytoskeleton</location>
    </subcellularLocation>
</comment>
<comment type="miscellaneous">
    <text>There are at least 16 actin genes in soybean.</text>
</comment>
<comment type="similarity">
    <text evidence="2">Belongs to the actin family.</text>
</comment>
<sequence length="376" mass="41609">MADAEDIEPLVCDNGTGMVKAGFAGDDAPRAVFPSIVGRPRHTGVMVGMGQKDXYVGDEAQSKRGILTLKYPIEHGIVSNWDDMEKIWHHTFYNELRVVSEEPXVLSXEAPLNPKVNRESAQIMFETFNVPAMYVAIQAVLSLYASGRTTGIVLDSGDGVSHTVPIYEGDALPHAILRLDLAGRDLTDHLMKILTERGYMFTTSAEREIVRDMKEKLAYVALDYEQELETAKSSSSVEKSHELPDGQVITIGAERFRCPKILFQPSMIEMEAAGIHETTYNSIMKCDVDIRKDLYGNIVLSGGSTMFLGIADRMSKEITALAPSSMKIKVVAPPERKYSVWIGGSILASLSTFQQMWISKGEYDESGPSIVHRKCF</sequence>
<feature type="chain" id="PRO_0000089023" description="Actin-3">
    <location>
        <begin position="1"/>
        <end position="376"/>
    </location>
</feature>
<protein>
    <recommendedName>
        <fullName>Actin-3</fullName>
        <ecNumber evidence="1">3.6.4.-</ecNumber>
    </recommendedName>
</protein>
<dbReference type="EC" id="3.6.4.-" evidence="1"/>
<dbReference type="EMBL" id="V00450">
    <property type="protein sequence ID" value="CAA23728.1"/>
    <property type="molecule type" value="Genomic_DNA"/>
</dbReference>
<dbReference type="PIR" id="A03006">
    <property type="entry name" value="ATSY3"/>
</dbReference>
<dbReference type="STRING" id="3847.P02580"/>
<dbReference type="PaxDb" id="3847-GLYMA05G32220.1"/>
<dbReference type="eggNOG" id="KOG0676">
    <property type="taxonomic scope" value="Eukaryota"/>
</dbReference>
<dbReference type="InParanoid" id="P02580"/>
<dbReference type="Proteomes" id="UP000008827">
    <property type="component" value="Unplaced"/>
</dbReference>
<dbReference type="GO" id="GO:0015629">
    <property type="term" value="C:actin cytoskeleton"/>
    <property type="evidence" value="ECO:0000318"/>
    <property type="project" value="GO_Central"/>
</dbReference>
<dbReference type="GO" id="GO:0005737">
    <property type="term" value="C:cytoplasm"/>
    <property type="evidence" value="ECO:0007669"/>
    <property type="project" value="UniProtKB-KW"/>
</dbReference>
<dbReference type="GO" id="GO:0005524">
    <property type="term" value="F:ATP binding"/>
    <property type="evidence" value="ECO:0007669"/>
    <property type="project" value="UniProtKB-KW"/>
</dbReference>
<dbReference type="GO" id="GO:0016787">
    <property type="term" value="F:hydrolase activity"/>
    <property type="evidence" value="ECO:0007669"/>
    <property type="project" value="UniProtKB-KW"/>
</dbReference>
<dbReference type="CDD" id="cd10224">
    <property type="entry name" value="ASKHA_NBD_actin"/>
    <property type="match status" value="1"/>
</dbReference>
<dbReference type="FunFam" id="2.30.36.70:FF:000001">
    <property type="entry name" value="Actin, alpha skeletal muscle"/>
    <property type="match status" value="1"/>
</dbReference>
<dbReference type="FunFam" id="3.30.420.40:FF:000291">
    <property type="entry name" value="Actin, alpha skeletal muscle"/>
    <property type="match status" value="1"/>
</dbReference>
<dbReference type="FunFam" id="3.90.640.10:FF:000001">
    <property type="entry name" value="Actin, muscle"/>
    <property type="match status" value="1"/>
</dbReference>
<dbReference type="FunFam" id="3.30.420.40:FF:000404">
    <property type="entry name" value="Major actin"/>
    <property type="match status" value="1"/>
</dbReference>
<dbReference type="FunFam" id="3.30.420.40:FF:000058">
    <property type="entry name" value="Putative actin-related protein 5"/>
    <property type="match status" value="1"/>
</dbReference>
<dbReference type="Gene3D" id="3.30.420.40">
    <property type="match status" value="2"/>
</dbReference>
<dbReference type="Gene3D" id="3.90.640.10">
    <property type="entry name" value="Actin, Chain A, domain 4"/>
    <property type="match status" value="1"/>
</dbReference>
<dbReference type="InterPro" id="IPR004000">
    <property type="entry name" value="Actin"/>
</dbReference>
<dbReference type="InterPro" id="IPR004001">
    <property type="entry name" value="Actin_CS"/>
</dbReference>
<dbReference type="InterPro" id="IPR043129">
    <property type="entry name" value="ATPase_NBD"/>
</dbReference>
<dbReference type="PANTHER" id="PTHR11937">
    <property type="entry name" value="ACTIN"/>
    <property type="match status" value="1"/>
</dbReference>
<dbReference type="Pfam" id="PF00022">
    <property type="entry name" value="Actin"/>
    <property type="match status" value="1"/>
</dbReference>
<dbReference type="PRINTS" id="PR00190">
    <property type="entry name" value="ACTIN"/>
</dbReference>
<dbReference type="SMART" id="SM00268">
    <property type="entry name" value="ACTIN"/>
    <property type="match status" value="1"/>
</dbReference>
<dbReference type="SUPFAM" id="SSF53067">
    <property type="entry name" value="Actin-like ATPase domain"/>
    <property type="match status" value="2"/>
</dbReference>
<dbReference type="PROSITE" id="PS00406">
    <property type="entry name" value="ACTINS_1"/>
    <property type="match status" value="1"/>
</dbReference>
<dbReference type="PROSITE" id="PS00432">
    <property type="entry name" value="ACTINS_2"/>
    <property type="match status" value="1"/>
</dbReference>
<reference key="1">
    <citation type="journal article" date="1982" name="Proc. Natl. Acad. Sci. U.S.A.">
        <title>Complete nucleotide sequence of a soybean actin gene.</title>
        <authorList>
            <person name="Shah D.M."/>
            <person name="Hightower R.C."/>
            <person name="Meagher R.B."/>
        </authorList>
    </citation>
    <scope>NUCLEOTIDE SEQUENCE [GENOMIC DNA]</scope>
</reference>
<reference key="2">
    <citation type="submission" date="1985-08" db="EMBL/GenBank/DDBJ databases">
        <authorList>
            <person name="Hightower R.C."/>
        </authorList>
    </citation>
    <scope>SEQUENCE REVISION TO 319</scope>
</reference>
<name>ACT3_SOYBN</name>
<keyword id="KW-0067">ATP-binding</keyword>
<keyword id="KW-0963">Cytoplasm</keyword>
<keyword id="KW-0206">Cytoskeleton</keyword>
<keyword id="KW-0378">Hydrolase</keyword>
<keyword id="KW-0547">Nucleotide-binding</keyword>
<keyword id="KW-1185">Reference proteome</keyword>
<gene>
    <name type="primary">SAC3</name>
</gene>